<name>PYRR_RUBXD</name>
<evidence type="ECO:0000255" key="1">
    <source>
        <dbReference type="HAMAP-Rule" id="MF_01219"/>
    </source>
</evidence>
<gene>
    <name evidence="1" type="primary">pyrR</name>
    <name type="ordered locus">Rxyl_1481</name>
</gene>
<dbReference type="EC" id="2.4.2.9" evidence="1"/>
<dbReference type="EMBL" id="CP000386">
    <property type="protein sequence ID" value="ABG04443.1"/>
    <property type="molecule type" value="Genomic_DNA"/>
</dbReference>
<dbReference type="RefSeq" id="WP_011564460.1">
    <property type="nucleotide sequence ID" value="NC_008148.1"/>
</dbReference>
<dbReference type="SMR" id="Q1AVY5"/>
<dbReference type="STRING" id="266117.Rxyl_1481"/>
<dbReference type="KEGG" id="rxy:Rxyl_1481"/>
<dbReference type="eggNOG" id="COG2065">
    <property type="taxonomic scope" value="Bacteria"/>
</dbReference>
<dbReference type="HOGENOM" id="CLU_094234_2_1_11"/>
<dbReference type="OrthoDB" id="9802227at2"/>
<dbReference type="PhylomeDB" id="Q1AVY5"/>
<dbReference type="Proteomes" id="UP000006637">
    <property type="component" value="Chromosome"/>
</dbReference>
<dbReference type="GO" id="GO:0004845">
    <property type="term" value="F:uracil phosphoribosyltransferase activity"/>
    <property type="evidence" value="ECO:0007669"/>
    <property type="project" value="UniProtKB-UniRule"/>
</dbReference>
<dbReference type="GO" id="GO:0006355">
    <property type="term" value="P:regulation of DNA-templated transcription"/>
    <property type="evidence" value="ECO:0007669"/>
    <property type="project" value="UniProtKB-UniRule"/>
</dbReference>
<dbReference type="CDD" id="cd06223">
    <property type="entry name" value="PRTases_typeI"/>
    <property type="match status" value="1"/>
</dbReference>
<dbReference type="FunFam" id="3.40.50.2020:FF:000020">
    <property type="entry name" value="Bifunctional protein PyrR"/>
    <property type="match status" value="1"/>
</dbReference>
<dbReference type="Gene3D" id="3.40.50.2020">
    <property type="match status" value="1"/>
</dbReference>
<dbReference type="HAMAP" id="MF_01219">
    <property type="entry name" value="PyrR"/>
    <property type="match status" value="1"/>
</dbReference>
<dbReference type="InterPro" id="IPR000836">
    <property type="entry name" value="PRibTrfase_dom"/>
</dbReference>
<dbReference type="InterPro" id="IPR029057">
    <property type="entry name" value="PRTase-like"/>
</dbReference>
<dbReference type="InterPro" id="IPR023050">
    <property type="entry name" value="PyrR"/>
</dbReference>
<dbReference type="InterPro" id="IPR050137">
    <property type="entry name" value="PyrR_bifunctional"/>
</dbReference>
<dbReference type="NCBIfam" id="NF003549">
    <property type="entry name" value="PRK05205.1-5"/>
    <property type="match status" value="1"/>
</dbReference>
<dbReference type="PANTHER" id="PTHR11608">
    <property type="entry name" value="BIFUNCTIONAL PROTEIN PYRR"/>
    <property type="match status" value="1"/>
</dbReference>
<dbReference type="PANTHER" id="PTHR11608:SF0">
    <property type="entry name" value="BIFUNCTIONAL PROTEIN PYRR"/>
    <property type="match status" value="1"/>
</dbReference>
<dbReference type="Pfam" id="PF00156">
    <property type="entry name" value="Pribosyltran"/>
    <property type="match status" value="1"/>
</dbReference>
<dbReference type="SUPFAM" id="SSF53271">
    <property type="entry name" value="PRTase-like"/>
    <property type="match status" value="1"/>
</dbReference>
<reference key="1">
    <citation type="submission" date="2006-06" db="EMBL/GenBank/DDBJ databases">
        <title>Complete sequence of Rubrobacter xylanophilus DSM 9941.</title>
        <authorList>
            <consortium name="US DOE Joint Genome Institute"/>
            <person name="Copeland A."/>
            <person name="Lucas S."/>
            <person name="Lapidus A."/>
            <person name="Barry K."/>
            <person name="Detter J.C."/>
            <person name="Glavina del Rio T."/>
            <person name="Hammon N."/>
            <person name="Israni S."/>
            <person name="Dalin E."/>
            <person name="Tice H."/>
            <person name="Pitluck S."/>
            <person name="Munk A.C."/>
            <person name="Brettin T."/>
            <person name="Bruce D."/>
            <person name="Han C."/>
            <person name="Tapia R."/>
            <person name="Gilna P."/>
            <person name="Schmutz J."/>
            <person name="Larimer F."/>
            <person name="Land M."/>
            <person name="Hauser L."/>
            <person name="Kyrpides N."/>
            <person name="Lykidis A."/>
            <person name="da Costa M.S."/>
            <person name="Rainey F.A."/>
            <person name="Empadinhas N."/>
            <person name="Jolivet E."/>
            <person name="Battista J.R."/>
            <person name="Richardson P."/>
        </authorList>
    </citation>
    <scope>NUCLEOTIDE SEQUENCE [LARGE SCALE GENOMIC DNA]</scope>
    <source>
        <strain>DSM 9941 / JCM 11954 / NBRC 16129 / PRD-1</strain>
    </source>
</reference>
<protein>
    <recommendedName>
        <fullName evidence="1">Bifunctional protein PyrR</fullName>
    </recommendedName>
    <domain>
        <recommendedName>
            <fullName evidence="1">Pyrimidine operon regulatory protein</fullName>
        </recommendedName>
    </domain>
    <domain>
        <recommendedName>
            <fullName evidence="1">Uracil phosphoribosyltransferase</fullName>
            <shortName evidence="1">UPRTase</shortName>
            <ecNumber evidence="1">2.4.2.9</ecNumber>
        </recommendedName>
    </domain>
</protein>
<proteinExistence type="inferred from homology"/>
<feature type="chain" id="PRO_1000053860" description="Bifunctional protein PyrR">
    <location>
        <begin position="1"/>
        <end position="184"/>
    </location>
</feature>
<feature type="short sequence motif" description="PRPP-binding" evidence="1">
    <location>
        <begin position="105"/>
        <end position="117"/>
    </location>
</feature>
<sequence length="184" mass="19889">MSRLGFGERVRACVLTGDQISRSLRRISHEILERNASSLEELALVGILTRGVPLAHRIAGNIRRFEGLEVPVGALDITLHRDDLDGEDPEVKGSHIPFEVAGRTVVMVDDVLFTGRTARAAMDALLERGRPAAIQLAVLVDRGHRELPIRADYVGKNIPTSLGESVRVGLVETDGEDGVVVVGS</sequence>
<comment type="function">
    <text evidence="1">Regulates the transcription of the pyrimidine nucleotide (pyr) operon in response to exogenous pyrimidines.</text>
</comment>
<comment type="function">
    <text evidence="1">Also displays a weak uracil phosphoribosyltransferase activity which is not physiologically significant.</text>
</comment>
<comment type="catalytic activity">
    <reaction evidence="1">
        <text>UMP + diphosphate = 5-phospho-alpha-D-ribose 1-diphosphate + uracil</text>
        <dbReference type="Rhea" id="RHEA:13017"/>
        <dbReference type="ChEBI" id="CHEBI:17568"/>
        <dbReference type="ChEBI" id="CHEBI:33019"/>
        <dbReference type="ChEBI" id="CHEBI:57865"/>
        <dbReference type="ChEBI" id="CHEBI:58017"/>
        <dbReference type="EC" id="2.4.2.9"/>
    </reaction>
</comment>
<comment type="similarity">
    <text evidence="1">Belongs to the purine/pyrimidine phosphoribosyltransferase family. PyrR subfamily.</text>
</comment>
<accession>Q1AVY5</accession>
<organism>
    <name type="scientific">Rubrobacter xylanophilus (strain DSM 9941 / JCM 11954 / NBRC 16129 / PRD-1)</name>
    <dbReference type="NCBI Taxonomy" id="266117"/>
    <lineage>
        <taxon>Bacteria</taxon>
        <taxon>Bacillati</taxon>
        <taxon>Actinomycetota</taxon>
        <taxon>Rubrobacteria</taxon>
        <taxon>Rubrobacterales</taxon>
        <taxon>Rubrobacteraceae</taxon>
        <taxon>Rubrobacter</taxon>
    </lineage>
</organism>
<keyword id="KW-0328">Glycosyltransferase</keyword>
<keyword id="KW-1185">Reference proteome</keyword>
<keyword id="KW-0804">Transcription</keyword>
<keyword id="KW-0805">Transcription regulation</keyword>
<keyword id="KW-0808">Transferase</keyword>